<keyword id="KW-0963">Cytoplasm</keyword>
<keyword id="KW-0460">Magnesium</keyword>
<keyword id="KW-0479">Metal-binding</keyword>
<keyword id="KW-0548">Nucleotidyltransferase</keyword>
<keyword id="KW-1185">Reference proteome</keyword>
<keyword id="KW-0694">RNA-binding</keyword>
<keyword id="KW-0808">Transferase</keyword>
<protein>
    <recommendedName>
        <fullName evidence="1">Polyribonucleotide nucleotidyltransferase</fullName>
        <ecNumber evidence="1">2.7.7.8</ecNumber>
    </recommendedName>
    <alternativeName>
        <fullName evidence="1">Polynucleotide phosphorylase</fullName>
        <shortName evidence="1">PNPase</shortName>
    </alternativeName>
</protein>
<accession>Q46JM7</accession>
<dbReference type="EC" id="2.7.7.8" evidence="1"/>
<dbReference type="EMBL" id="CP000095">
    <property type="protein sequence ID" value="AAZ58301.1"/>
    <property type="molecule type" value="Genomic_DNA"/>
</dbReference>
<dbReference type="RefSeq" id="WP_011294898.1">
    <property type="nucleotide sequence ID" value="NC_007335.2"/>
</dbReference>
<dbReference type="SMR" id="Q46JM7"/>
<dbReference type="STRING" id="59920.PMN2A_0810"/>
<dbReference type="KEGG" id="pmn:PMN2A_0810"/>
<dbReference type="HOGENOM" id="CLU_004217_2_2_3"/>
<dbReference type="OrthoDB" id="9804305at2"/>
<dbReference type="PhylomeDB" id="Q46JM7"/>
<dbReference type="Proteomes" id="UP000002535">
    <property type="component" value="Chromosome"/>
</dbReference>
<dbReference type="GO" id="GO:0005829">
    <property type="term" value="C:cytosol"/>
    <property type="evidence" value="ECO:0007669"/>
    <property type="project" value="TreeGrafter"/>
</dbReference>
<dbReference type="GO" id="GO:0000175">
    <property type="term" value="F:3'-5'-RNA exonuclease activity"/>
    <property type="evidence" value="ECO:0007669"/>
    <property type="project" value="TreeGrafter"/>
</dbReference>
<dbReference type="GO" id="GO:0000287">
    <property type="term" value="F:magnesium ion binding"/>
    <property type="evidence" value="ECO:0007669"/>
    <property type="project" value="UniProtKB-UniRule"/>
</dbReference>
<dbReference type="GO" id="GO:0004654">
    <property type="term" value="F:polyribonucleotide nucleotidyltransferase activity"/>
    <property type="evidence" value="ECO:0007669"/>
    <property type="project" value="UniProtKB-UniRule"/>
</dbReference>
<dbReference type="GO" id="GO:0003723">
    <property type="term" value="F:RNA binding"/>
    <property type="evidence" value="ECO:0007669"/>
    <property type="project" value="UniProtKB-UniRule"/>
</dbReference>
<dbReference type="GO" id="GO:0006402">
    <property type="term" value="P:mRNA catabolic process"/>
    <property type="evidence" value="ECO:0007669"/>
    <property type="project" value="UniProtKB-UniRule"/>
</dbReference>
<dbReference type="GO" id="GO:0006396">
    <property type="term" value="P:RNA processing"/>
    <property type="evidence" value="ECO:0007669"/>
    <property type="project" value="InterPro"/>
</dbReference>
<dbReference type="CDD" id="cd02393">
    <property type="entry name" value="KH-I_PNPase"/>
    <property type="match status" value="1"/>
</dbReference>
<dbReference type="CDD" id="cd11363">
    <property type="entry name" value="RNase_PH_PNPase_1"/>
    <property type="match status" value="1"/>
</dbReference>
<dbReference type="CDD" id="cd11364">
    <property type="entry name" value="RNase_PH_PNPase_2"/>
    <property type="match status" value="1"/>
</dbReference>
<dbReference type="FunFam" id="2.40.50.140:FF:000023">
    <property type="entry name" value="Polyribonucleotide nucleotidyltransferase"/>
    <property type="match status" value="1"/>
</dbReference>
<dbReference type="FunFam" id="3.30.1370.10:FF:000001">
    <property type="entry name" value="Polyribonucleotide nucleotidyltransferase"/>
    <property type="match status" value="1"/>
</dbReference>
<dbReference type="FunFam" id="3.30.230.70:FF:000001">
    <property type="entry name" value="Polyribonucleotide nucleotidyltransferase"/>
    <property type="match status" value="1"/>
</dbReference>
<dbReference type="FunFam" id="3.30.230.70:FF:000002">
    <property type="entry name" value="Polyribonucleotide nucleotidyltransferase"/>
    <property type="match status" value="1"/>
</dbReference>
<dbReference type="Gene3D" id="3.30.230.70">
    <property type="entry name" value="GHMP Kinase, N-terminal domain"/>
    <property type="match status" value="2"/>
</dbReference>
<dbReference type="Gene3D" id="3.30.1370.10">
    <property type="entry name" value="K Homology domain, type 1"/>
    <property type="match status" value="1"/>
</dbReference>
<dbReference type="Gene3D" id="2.40.50.140">
    <property type="entry name" value="Nucleic acid-binding proteins"/>
    <property type="match status" value="1"/>
</dbReference>
<dbReference type="HAMAP" id="MF_01595">
    <property type="entry name" value="PNPase"/>
    <property type="match status" value="1"/>
</dbReference>
<dbReference type="InterPro" id="IPR001247">
    <property type="entry name" value="ExoRNase_PH_dom1"/>
</dbReference>
<dbReference type="InterPro" id="IPR015847">
    <property type="entry name" value="ExoRNase_PH_dom2"/>
</dbReference>
<dbReference type="InterPro" id="IPR036345">
    <property type="entry name" value="ExoRNase_PH_dom2_sf"/>
</dbReference>
<dbReference type="InterPro" id="IPR004087">
    <property type="entry name" value="KH_dom"/>
</dbReference>
<dbReference type="InterPro" id="IPR004088">
    <property type="entry name" value="KH_dom_type_1"/>
</dbReference>
<dbReference type="InterPro" id="IPR036612">
    <property type="entry name" value="KH_dom_type_1_sf"/>
</dbReference>
<dbReference type="InterPro" id="IPR012340">
    <property type="entry name" value="NA-bd_OB-fold"/>
</dbReference>
<dbReference type="InterPro" id="IPR012162">
    <property type="entry name" value="PNPase"/>
</dbReference>
<dbReference type="InterPro" id="IPR027408">
    <property type="entry name" value="PNPase/RNase_PH_dom_sf"/>
</dbReference>
<dbReference type="InterPro" id="IPR015848">
    <property type="entry name" value="PNPase_PH_RNA-bd_bac/org-type"/>
</dbReference>
<dbReference type="InterPro" id="IPR036456">
    <property type="entry name" value="PNPase_PH_RNA-bd_sf"/>
</dbReference>
<dbReference type="InterPro" id="IPR020568">
    <property type="entry name" value="Ribosomal_Su5_D2-typ_SF"/>
</dbReference>
<dbReference type="InterPro" id="IPR003029">
    <property type="entry name" value="S1_domain"/>
</dbReference>
<dbReference type="NCBIfam" id="TIGR03591">
    <property type="entry name" value="polynuc_phos"/>
    <property type="match status" value="1"/>
</dbReference>
<dbReference type="NCBIfam" id="NF008805">
    <property type="entry name" value="PRK11824.1"/>
    <property type="match status" value="1"/>
</dbReference>
<dbReference type="PANTHER" id="PTHR11252">
    <property type="entry name" value="POLYRIBONUCLEOTIDE NUCLEOTIDYLTRANSFERASE"/>
    <property type="match status" value="1"/>
</dbReference>
<dbReference type="PANTHER" id="PTHR11252:SF0">
    <property type="entry name" value="POLYRIBONUCLEOTIDE NUCLEOTIDYLTRANSFERASE 1, MITOCHONDRIAL"/>
    <property type="match status" value="1"/>
</dbReference>
<dbReference type="Pfam" id="PF00013">
    <property type="entry name" value="KH_1"/>
    <property type="match status" value="1"/>
</dbReference>
<dbReference type="Pfam" id="PF03726">
    <property type="entry name" value="PNPase"/>
    <property type="match status" value="1"/>
</dbReference>
<dbReference type="Pfam" id="PF01138">
    <property type="entry name" value="RNase_PH"/>
    <property type="match status" value="2"/>
</dbReference>
<dbReference type="Pfam" id="PF03725">
    <property type="entry name" value="RNase_PH_C"/>
    <property type="match status" value="1"/>
</dbReference>
<dbReference type="Pfam" id="PF00575">
    <property type="entry name" value="S1"/>
    <property type="match status" value="1"/>
</dbReference>
<dbReference type="PIRSF" id="PIRSF005499">
    <property type="entry name" value="PNPase"/>
    <property type="match status" value="1"/>
</dbReference>
<dbReference type="SMART" id="SM00322">
    <property type="entry name" value="KH"/>
    <property type="match status" value="1"/>
</dbReference>
<dbReference type="SMART" id="SM00316">
    <property type="entry name" value="S1"/>
    <property type="match status" value="1"/>
</dbReference>
<dbReference type="SUPFAM" id="SSF54791">
    <property type="entry name" value="Eukaryotic type KH-domain (KH-domain type I)"/>
    <property type="match status" value="1"/>
</dbReference>
<dbReference type="SUPFAM" id="SSF50249">
    <property type="entry name" value="Nucleic acid-binding proteins"/>
    <property type="match status" value="1"/>
</dbReference>
<dbReference type="SUPFAM" id="SSF46915">
    <property type="entry name" value="Polynucleotide phosphorylase/guanosine pentaphosphate synthase (PNPase/GPSI), domain 3"/>
    <property type="match status" value="1"/>
</dbReference>
<dbReference type="SUPFAM" id="SSF55666">
    <property type="entry name" value="Ribonuclease PH domain 2-like"/>
    <property type="match status" value="2"/>
</dbReference>
<dbReference type="SUPFAM" id="SSF54211">
    <property type="entry name" value="Ribosomal protein S5 domain 2-like"/>
    <property type="match status" value="2"/>
</dbReference>
<dbReference type="PROSITE" id="PS50084">
    <property type="entry name" value="KH_TYPE_1"/>
    <property type="match status" value="1"/>
</dbReference>
<dbReference type="PROSITE" id="PS50126">
    <property type="entry name" value="S1"/>
    <property type="match status" value="1"/>
</dbReference>
<feature type="chain" id="PRO_0000329772" description="Polyribonucleotide nucleotidyltransferase">
    <location>
        <begin position="1"/>
        <end position="722"/>
    </location>
</feature>
<feature type="domain" description="KH" evidence="1">
    <location>
        <begin position="562"/>
        <end position="621"/>
    </location>
</feature>
<feature type="domain" description="S1 motif" evidence="1">
    <location>
        <begin position="631"/>
        <end position="699"/>
    </location>
</feature>
<feature type="region of interest" description="Disordered" evidence="2">
    <location>
        <begin position="700"/>
        <end position="722"/>
    </location>
</feature>
<feature type="compositionally biased region" description="Pro residues" evidence="2">
    <location>
        <begin position="712"/>
        <end position="722"/>
    </location>
</feature>
<feature type="binding site" evidence="1">
    <location>
        <position position="495"/>
    </location>
    <ligand>
        <name>Mg(2+)</name>
        <dbReference type="ChEBI" id="CHEBI:18420"/>
    </ligand>
</feature>
<feature type="binding site" evidence="1">
    <location>
        <position position="501"/>
    </location>
    <ligand>
        <name>Mg(2+)</name>
        <dbReference type="ChEBI" id="CHEBI:18420"/>
    </ligand>
</feature>
<organism>
    <name type="scientific">Prochlorococcus marinus (strain NATL2A)</name>
    <dbReference type="NCBI Taxonomy" id="59920"/>
    <lineage>
        <taxon>Bacteria</taxon>
        <taxon>Bacillati</taxon>
        <taxon>Cyanobacteriota</taxon>
        <taxon>Cyanophyceae</taxon>
        <taxon>Synechococcales</taxon>
        <taxon>Prochlorococcaceae</taxon>
        <taxon>Prochlorococcus</taxon>
    </lineage>
</organism>
<reference key="1">
    <citation type="journal article" date="2007" name="PLoS Genet.">
        <title>Patterns and implications of gene gain and loss in the evolution of Prochlorococcus.</title>
        <authorList>
            <person name="Kettler G.C."/>
            <person name="Martiny A.C."/>
            <person name="Huang K."/>
            <person name="Zucker J."/>
            <person name="Coleman M.L."/>
            <person name="Rodrigue S."/>
            <person name="Chen F."/>
            <person name="Lapidus A."/>
            <person name="Ferriera S."/>
            <person name="Johnson J."/>
            <person name="Steglich C."/>
            <person name="Church G.M."/>
            <person name="Richardson P."/>
            <person name="Chisholm S.W."/>
        </authorList>
    </citation>
    <scope>NUCLEOTIDE SEQUENCE [LARGE SCALE GENOMIC DNA]</scope>
    <source>
        <strain>NATL2A</strain>
    </source>
</reference>
<comment type="function">
    <text evidence="1">Involved in mRNA degradation. Catalyzes the phosphorolysis of single-stranded polyribonucleotides processively in the 3'- to 5'-direction.</text>
</comment>
<comment type="catalytic activity">
    <reaction evidence="1">
        <text>RNA(n+1) + phosphate = RNA(n) + a ribonucleoside 5'-diphosphate</text>
        <dbReference type="Rhea" id="RHEA:22096"/>
        <dbReference type="Rhea" id="RHEA-COMP:14527"/>
        <dbReference type="Rhea" id="RHEA-COMP:17342"/>
        <dbReference type="ChEBI" id="CHEBI:43474"/>
        <dbReference type="ChEBI" id="CHEBI:57930"/>
        <dbReference type="ChEBI" id="CHEBI:140395"/>
        <dbReference type="EC" id="2.7.7.8"/>
    </reaction>
</comment>
<comment type="cofactor">
    <cofactor evidence="1">
        <name>Mg(2+)</name>
        <dbReference type="ChEBI" id="CHEBI:18420"/>
    </cofactor>
</comment>
<comment type="subcellular location">
    <subcellularLocation>
        <location evidence="1">Cytoplasm</location>
    </subcellularLocation>
</comment>
<comment type="similarity">
    <text evidence="1">Belongs to the polyribonucleotide nucleotidyltransferase family.</text>
</comment>
<proteinExistence type="inferred from homology"/>
<evidence type="ECO:0000255" key="1">
    <source>
        <dbReference type="HAMAP-Rule" id="MF_01595"/>
    </source>
</evidence>
<evidence type="ECO:0000256" key="2">
    <source>
        <dbReference type="SAM" id="MobiDB-lite"/>
    </source>
</evidence>
<gene>
    <name evidence="1" type="primary">pnp</name>
    <name type="ordered locus">PMN2A_0810</name>
</gene>
<name>PNP_PROMT</name>
<sequence length="722" mass="78259">MQGQTKSVSFDGREIKLTTGRFAPQAGGSVMIECGDTSVLVTATKSSGREGVDFLPLMCDYEERLYAAGRIPGSFMRREGRPPERATLISRLIDRPMRPLFPGWMRDDIQIVATCLSLDERVPADVLAVTGASMATLMAGIPFQGPMAAVRVGLLGDDFVLNPSYREIERGDLDLVVAGTPDGVVMVEAGANQLSEQDVIEAIDFGYEAITELINAQKEVLKESGIKQEMPKAPEIDDTISTYLDKNCTKSISEVLKNFDQTKEERDNKIEEIKISISAKIDGLKDDNAVKKSLSLNNKLLENSYKALTKKLMREQIIKEGKRVDGRELNEVRAIDADAAVLPNRVHGSALFQRGLTQVLSTATLGTPSDAQEMDDLNPNTDKTYIHHYNFPPYSVGETRPMRTPGRREVGHGALAERALIPVLPAKDTFPYVLRVVSEVLSSNGSTSMASVCGSTLALMDAGVPLKAPVGGAAMGLIKEGKEVRILTDIQGIEDFLGDMDFKVAGTEKGITALQMDMKITGLPIETIGEAINQALPARTHILGKMLDAIETPKDNLSPHAPRLLSFRIDPELIGTVIGPGGRTIKGITERTNTKIDIEDGGIVTIASHDGAAAEEAQRIIEGLTRKVHEGEIFPGSITRIIPIGAFVEILPGKEGMIHISQLSEARVEKVEDVVKVGDQVTVRVREIDNRGRINLTLRGVSQNGGMSNYPEPTPTPVAPLT</sequence>